<accession>Q3YEG3</accession>
<protein>
    <recommendedName>
        <fullName>Conotoxin MiK42</fullName>
    </recommendedName>
</protein>
<keyword id="KW-0165">Cleavage on pair of basic residues</keyword>
<keyword id="KW-1015">Disulfide bond</keyword>
<keyword id="KW-0960">Knottin</keyword>
<keyword id="KW-0528">Neurotoxin</keyword>
<keyword id="KW-0964">Secreted</keyword>
<keyword id="KW-0732">Signal</keyword>
<keyword id="KW-0800">Toxin</keyword>
<feature type="signal peptide" evidence="2">
    <location>
        <begin position="1"/>
        <end position="22"/>
    </location>
</feature>
<feature type="propeptide" id="PRO_0000273431" evidence="1">
    <location>
        <begin position="23"/>
        <end position="49"/>
    </location>
</feature>
<feature type="peptide" id="PRO_0000273432" description="Conotoxin MiK42">
    <location>
        <begin position="52"/>
        <end position="82"/>
    </location>
</feature>
<feature type="disulfide bond" evidence="1">
    <location>
        <begin position="52"/>
        <end position="67"/>
    </location>
</feature>
<feature type="disulfide bond" evidence="1">
    <location>
        <begin position="59"/>
        <end position="70"/>
    </location>
</feature>
<feature type="disulfide bond" evidence="1">
    <location>
        <begin position="66"/>
        <end position="80"/>
    </location>
</feature>
<evidence type="ECO:0000250" key="1"/>
<evidence type="ECO:0000255" key="2"/>
<evidence type="ECO:0000305" key="3"/>
<sequence>MKLTCALIVAMLLLTACQLITTDDFRGRQQYRTARSRTKMQNYKIFRLTKRCDAPNAPCEKFDNDCCDACMLREKQQPICAV</sequence>
<proteinExistence type="evidence at transcript level"/>
<organism>
    <name type="scientific">Conus miles</name>
    <name type="common">Soldier cone</name>
    <name type="synonym">Mile cone</name>
    <dbReference type="NCBI Taxonomy" id="69564"/>
    <lineage>
        <taxon>Eukaryota</taxon>
        <taxon>Metazoa</taxon>
        <taxon>Spiralia</taxon>
        <taxon>Lophotrochozoa</taxon>
        <taxon>Mollusca</taxon>
        <taxon>Gastropoda</taxon>
        <taxon>Caenogastropoda</taxon>
        <taxon>Neogastropoda</taxon>
        <taxon>Conoidea</taxon>
        <taxon>Conidae</taxon>
        <taxon>Conus</taxon>
        <taxon>Rhizoconus</taxon>
    </lineage>
</organism>
<reference key="1">
    <citation type="journal article" date="2007" name="J. Pept. Sci.">
        <title>Diversity of the O-superfamily conotoxins from Conus miles.</title>
        <authorList>
            <person name="Luo S."/>
            <person name="Zhangsun D."/>
            <person name="Feng J."/>
            <person name="Wu Y."/>
            <person name="Zhu X."/>
            <person name="Hu Y."/>
        </authorList>
    </citation>
    <scope>NUCLEOTIDE SEQUENCE [MRNA]</scope>
    <source>
        <tissue>Venom duct</tissue>
    </source>
</reference>
<name>O1642_CONMI</name>
<comment type="subcellular location">
    <subcellularLocation>
        <location evidence="1">Secreted</location>
    </subcellularLocation>
</comment>
<comment type="tissue specificity">
    <text>Expressed by the venom duct.</text>
</comment>
<comment type="domain">
    <text evidence="1">The presence of a 'disulfide through disulfide knot' structurally defines this protein as a knottin.</text>
</comment>
<comment type="domain">
    <text>The cysteine framework is VI/VII (C-C-CC-C-C).</text>
</comment>
<comment type="similarity">
    <text evidence="3">Belongs to the conotoxin O1 superfamily.</text>
</comment>
<dbReference type="EMBL" id="DQ141150">
    <property type="protein sequence ID" value="AAZ83751.1"/>
    <property type="molecule type" value="mRNA"/>
</dbReference>
<dbReference type="ConoServer" id="1111">
    <property type="toxin name" value="MiK42 precursor"/>
</dbReference>
<dbReference type="GO" id="GO:0005576">
    <property type="term" value="C:extracellular region"/>
    <property type="evidence" value="ECO:0007669"/>
    <property type="project" value="UniProtKB-SubCell"/>
</dbReference>
<dbReference type="GO" id="GO:0008200">
    <property type="term" value="F:ion channel inhibitor activity"/>
    <property type="evidence" value="ECO:0007669"/>
    <property type="project" value="InterPro"/>
</dbReference>
<dbReference type="GO" id="GO:0090729">
    <property type="term" value="F:toxin activity"/>
    <property type="evidence" value="ECO:0007669"/>
    <property type="project" value="UniProtKB-KW"/>
</dbReference>
<dbReference type="InterPro" id="IPR004214">
    <property type="entry name" value="Conotoxin"/>
</dbReference>
<dbReference type="Pfam" id="PF02950">
    <property type="entry name" value="Conotoxin"/>
    <property type="match status" value="1"/>
</dbReference>